<comment type="function">
    <text evidence="1">Activates expression of the rhaBAD and rhaT operons.</text>
</comment>
<comment type="subunit">
    <text evidence="1">Binds DNA as a dimer.</text>
</comment>
<comment type="subcellular location">
    <subcellularLocation>
        <location evidence="1">Cytoplasm</location>
    </subcellularLocation>
</comment>
<gene>
    <name evidence="1" type="primary">rhaS</name>
    <name type="ordered locus">CKO_03099</name>
</gene>
<organism>
    <name type="scientific">Citrobacter koseri (strain ATCC BAA-895 / CDC 4225-83 / SGSC4696)</name>
    <dbReference type="NCBI Taxonomy" id="290338"/>
    <lineage>
        <taxon>Bacteria</taxon>
        <taxon>Pseudomonadati</taxon>
        <taxon>Pseudomonadota</taxon>
        <taxon>Gammaproteobacteria</taxon>
        <taxon>Enterobacterales</taxon>
        <taxon>Enterobacteriaceae</taxon>
        <taxon>Citrobacter</taxon>
    </lineage>
</organism>
<proteinExistence type="inferred from homology"/>
<accession>A8AL27</accession>
<evidence type="ECO:0000255" key="1">
    <source>
        <dbReference type="HAMAP-Rule" id="MF_01534"/>
    </source>
</evidence>
<feature type="chain" id="PRO_1000068699" description="HTH-type transcriptional activator RhaS">
    <location>
        <begin position="1"/>
        <end position="278"/>
    </location>
</feature>
<feature type="domain" description="HTH araC/xylS-type" evidence="1">
    <location>
        <begin position="174"/>
        <end position="272"/>
    </location>
</feature>
<feature type="DNA-binding region" description="H-T-H motif" evidence="1">
    <location>
        <begin position="191"/>
        <end position="212"/>
    </location>
</feature>
<feature type="DNA-binding region" description="H-T-H motif" evidence="1">
    <location>
        <begin position="239"/>
        <end position="262"/>
    </location>
</feature>
<feature type="site" description="Interaction with sigma-70" evidence="1">
    <location>
        <position position="241"/>
    </location>
</feature>
<feature type="site" description="Interaction with sigma-70" evidence="1">
    <location>
        <position position="250"/>
    </location>
</feature>
<dbReference type="EMBL" id="CP000822">
    <property type="protein sequence ID" value="ABV14190.1"/>
    <property type="molecule type" value="Genomic_DNA"/>
</dbReference>
<dbReference type="RefSeq" id="WP_012133897.1">
    <property type="nucleotide sequence ID" value="NC_009792.1"/>
</dbReference>
<dbReference type="SMR" id="A8AL27"/>
<dbReference type="STRING" id="290338.CKO_03099"/>
<dbReference type="GeneID" id="45136896"/>
<dbReference type="KEGG" id="cko:CKO_03099"/>
<dbReference type="HOGENOM" id="CLU_000445_88_5_6"/>
<dbReference type="OrthoDB" id="2547276at2"/>
<dbReference type="Proteomes" id="UP000008148">
    <property type="component" value="Chromosome"/>
</dbReference>
<dbReference type="GO" id="GO:0005737">
    <property type="term" value="C:cytoplasm"/>
    <property type="evidence" value="ECO:0007669"/>
    <property type="project" value="UniProtKB-SubCell"/>
</dbReference>
<dbReference type="GO" id="GO:0003700">
    <property type="term" value="F:DNA-binding transcription factor activity"/>
    <property type="evidence" value="ECO:0007669"/>
    <property type="project" value="UniProtKB-UniRule"/>
</dbReference>
<dbReference type="GO" id="GO:0043565">
    <property type="term" value="F:sequence-specific DNA binding"/>
    <property type="evidence" value="ECO:0007669"/>
    <property type="project" value="InterPro"/>
</dbReference>
<dbReference type="GO" id="GO:0045893">
    <property type="term" value="P:positive regulation of DNA-templated transcription"/>
    <property type="evidence" value="ECO:0007669"/>
    <property type="project" value="UniProtKB-UniRule"/>
</dbReference>
<dbReference type="GO" id="GO:0019299">
    <property type="term" value="P:rhamnose metabolic process"/>
    <property type="evidence" value="ECO:0007669"/>
    <property type="project" value="UniProtKB-UniRule"/>
</dbReference>
<dbReference type="CDD" id="cd06977">
    <property type="entry name" value="cupin_RhaR_RhaS-like_N"/>
    <property type="match status" value="1"/>
</dbReference>
<dbReference type="Gene3D" id="1.10.10.60">
    <property type="entry name" value="Homeodomain-like"/>
    <property type="match status" value="1"/>
</dbReference>
<dbReference type="Gene3D" id="2.60.120.10">
    <property type="entry name" value="Jelly Rolls"/>
    <property type="match status" value="1"/>
</dbReference>
<dbReference type="HAMAP" id="MF_01534">
    <property type="entry name" value="HTH_type_RhaS"/>
    <property type="match status" value="1"/>
</dbReference>
<dbReference type="InterPro" id="IPR003313">
    <property type="entry name" value="AraC-bd"/>
</dbReference>
<dbReference type="InterPro" id="IPR050204">
    <property type="entry name" value="AraC_XylS_family_regulators"/>
</dbReference>
<dbReference type="InterPro" id="IPR009057">
    <property type="entry name" value="Homeodomain-like_sf"/>
</dbReference>
<dbReference type="InterPro" id="IPR037923">
    <property type="entry name" value="HTH-like"/>
</dbReference>
<dbReference type="InterPro" id="IPR018060">
    <property type="entry name" value="HTH_AraC"/>
</dbReference>
<dbReference type="InterPro" id="IPR018062">
    <property type="entry name" value="HTH_AraC-typ_CS"/>
</dbReference>
<dbReference type="InterPro" id="IPR047220">
    <property type="entry name" value="RhaR_RhaS-like_N"/>
</dbReference>
<dbReference type="InterPro" id="IPR014710">
    <property type="entry name" value="RmlC-like_jellyroll"/>
</dbReference>
<dbReference type="InterPro" id="IPR020449">
    <property type="entry name" value="Tscrpt_reg_AraC-type_HTH"/>
</dbReference>
<dbReference type="InterPro" id="IPR023609">
    <property type="entry name" value="Tscrpt_reg_HTH_RhaS"/>
</dbReference>
<dbReference type="NCBIfam" id="NF010028">
    <property type="entry name" value="PRK13503.1"/>
    <property type="match status" value="1"/>
</dbReference>
<dbReference type="PANTHER" id="PTHR46796:SF13">
    <property type="entry name" value="HTH-TYPE TRANSCRIPTIONAL ACTIVATOR RHAS"/>
    <property type="match status" value="1"/>
</dbReference>
<dbReference type="PANTHER" id="PTHR46796">
    <property type="entry name" value="HTH-TYPE TRANSCRIPTIONAL ACTIVATOR RHAS-RELATED"/>
    <property type="match status" value="1"/>
</dbReference>
<dbReference type="Pfam" id="PF02311">
    <property type="entry name" value="AraC_binding"/>
    <property type="match status" value="1"/>
</dbReference>
<dbReference type="Pfam" id="PF12833">
    <property type="entry name" value="HTH_18"/>
    <property type="match status" value="1"/>
</dbReference>
<dbReference type="PRINTS" id="PR00032">
    <property type="entry name" value="HTHARAC"/>
</dbReference>
<dbReference type="SMART" id="SM00342">
    <property type="entry name" value="HTH_ARAC"/>
    <property type="match status" value="1"/>
</dbReference>
<dbReference type="SUPFAM" id="SSF46689">
    <property type="entry name" value="Homeodomain-like"/>
    <property type="match status" value="2"/>
</dbReference>
<dbReference type="SUPFAM" id="SSF51215">
    <property type="entry name" value="Regulatory protein AraC"/>
    <property type="match status" value="1"/>
</dbReference>
<dbReference type="PROSITE" id="PS00041">
    <property type="entry name" value="HTH_ARAC_FAMILY_1"/>
    <property type="match status" value="1"/>
</dbReference>
<dbReference type="PROSITE" id="PS01124">
    <property type="entry name" value="HTH_ARAC_FAMILY_2"/>
    <property type="match status" value="1"/>
</dbReference>
<reference key="1">
    <citation type="submission" date="2007-08" db="EMBL/GenBank/DDBJ databases">
        <authorList>
            <consortium name="The Citrobacter koseri Genome Sequencing Project"/>
            <person name="McClelland M."/>
            <person name="Sanderson E.K."/>
            <person name="Porwollik S."/>
            <person name="Spieth J."/>
            <person name="Clifton W.S."/>
            <person name="Latreille P."/>
            <person name="Courtney L."/>
            <person name="Wang C."/>
            <person name="Pepin K."/>
            <person name="Bhonagiri V."/>
            <person name="Nash W."/>
            <person name="Johnson M."/>
            <person name="Thiruvilangam P."/>
            <person name="Wilson R."/>
        </authorList>
    </citation>
    <scope>NUCLEOTIDE SEQUENCE [LARGE SCALE GENOMIC DNA]</scope>
    <source>
        <strain>ATCC BAA-895 / CDC 4225-83 / SGSC4696</strain>
    </source>
</reference>
<name>RHAS_CITK8</name>
<keyword id="KW-0010">Activator</keyword>
<keyword id="KW-0963">Cytoplasm</keyword>
<keyword id="KW-0238">DNA-binding</keyword>
<keyword id="KW-1185">Reference proteome</keyword>
<keyword id="KW-0677">Repeat</keyword>
<keyword id="KW-0684">Rhamnose metabolism</keyword>
<keyword id="KW-0804">Transcription</keyword>
<keyword id="KW-0805">Transcription regulation</keyword>
<protein>
    <recommendedName>
        <fullName evidence="1">HTH-type transcriptional activator RhaS</fullName>
    </recommendedName>
    <alternativeName>
        <fullName evidence="1">L-rhamnose operon regulatory protein RhaS</fullName>
    </alternativeName>
</protein>
<sequence length="278" mass="32045">MTVLHSVDFFPSGKAPVAIEPRLPQSAFPEHHHDFHEIVIVEHGTGIHVFNGQPYTISGGTVCFVRDHDRHLYEHTDNLCLTNVLYRSPDAFQFLAGLNQLLPQEQDGQYPSHWRVNQSALQQVRQLVAQMENAGDEMDTPAVANREILFMQLLVLLRKSSLMEGAANNDARLNQLLAWLEDHFAEEVCWESIADKFSLSLRTLHRQLKQQTGLTPQRYLNRLRLIKARHLLRHSDESVTDIAYRCGFGDSNHFSTLFRREFDWSPRDIRQGRDALLQ</sequence>